<dbReference type="EC" id="1.1.1.95" evidence="2"/>
<dbReference type="EC" id="1.1.1.399" evidence="2"/>
<dbReference type="EMBL" id="Z99263">
    <property type="protein sequence ID" value="CAB16440.1"/>
    <property type="molecule type" value="Genomic_DNA"/>
</dbReference>
<dbReference type="EMBL" id="AL583923">
    <property type="protein sequence ID" value="CAC30645.1"/>
    <property type="molecule type" value="Genomic_DNA"/>
</dbReference>
<dbReference type="PIR" id="T45418">
    <property type="entry name" value="T45418"/>
</dbReference>
<dbReference type="RefSeq" id="NP_302163.1">
    <property type="nucleotide sequence ID" value="NC_002677.1"/>
</dbReference>
<dbReference type="RefSeq" id="WP_010908484.1">
    <property type="nucleotide sequence ID" value="NC_002677.1"/>
</dbReference>
<dbReference type="SMR" id="O33116"/>
<dbReference type="STRING" id="272631.gene:17575537"/>
<dbReference type="KEGG" id="mle:ML1692"/>
<dbReference type="PATRIC" id="fig|272631.5.peg.3189"/>
<dbReference type="Leproma" id="ML1692"/>
<dbReference type="eggNOG" id="COG0111">
    <property type="taxonomic scope" value="Bacteria"/>
</dbReference>
<dbReference type="HOGENOM" id="CLU_019796_8_1_11"/>
<dbReference type="OrthoDB" id="9793626at2"/>
<dbReference type="UniPathway" id="UPA00135">
    <property type="reaction ID" value="UER00196"/>
</dbReference>
<dbReference type="Proteomes" id="UP000000806">
    <property type="component" value="Chromosome"/>
</dbReference>
<dbReference type="GO" id="GO:0051287">
    <property type="term" value="F:NAD binding"/>
    <property type="evidence" value="ECO:0007669"/>
    <property type="project" value="InterPro"/>
</dbReference>
<dbReference type="GO" id="GO:0004617">
    <property type="term" value="F:phosphoglycerate dehydrogenase activity"/>
    <property type="evidence" value="ECO:0007669"/>
    <property type="project" value="UniProtKB-EC"/>
</dbReference>
<dbReference type="GO" id="GO:0006564">
    <property type="term" value="P:L-serine biosynthetic process"/>
    <property type="evidence" value="ECO:0007669"/>
    <property type="project" value="UniProtKB-KW"/>
</dbReference>
<dbReference type="CDD" id="cd04902">
    <property type="entry name" value="ACT_3PGDH-xct"/>
    <property type="match status" value="1"/>
</dbReference>
<dbReference type="CDD" id="cd12173">
    <property type="entry name" value="PGDH_4"/>
    <property type="match status" value="1"/>
</dbReference>
<dbReference type="FunFam" id="3.40.50.720:FF:000021">
    <property type="entry name" value="D-3-phosphoglycerate dehydrogenase"/>
    <property type="match status" value="1"/>
</dbReference>
<dbReference type="Gene3D" id="3.30.70.260">
    <property type="match status" value="1"/>
</dbReference>
<dbReference type="Gene3D" id="3.30.1330.90">
    <property type="entry name" value="D-3-phosphoglycerate dehydrogenase, domain 3"/>
    <property type="match status" value="1"/>
</dbReference>
<dbReference type="Gene3D" id="3.40.50.720">
    <property type="entry name" value="NAD(P)-binding Rossmann-like Domain"/>
    <property type="match status" value="2"/>
</dbReference>
<dbReference type="InterPro" id="IPR045865">
    <property type="entry name" value="ACT-like_dom_sf"/>
</dbReference>
<dbReference type="InterPro" id="IPR002912">
    <property type="entry name" value="ACT_dom"/>
</dbReference>
<dbReference type="InterPro" id="IPR029009">
    <property type="entry name" value="ASB_dom_sf"/>
</dbReference>
<dbReference type="InterPro" id="IPR050857">
    <property type="entry name" value="D-2-hydroxyacid_DH"/>
</dbReference>
<dbReference type="InterPro" id="IPR006139">
    <property type="entry name" value="D-isomer_2_OHA_DH_cat_dom"/>
</dbReference>
<dbReference type="InterPro" id="IPR029753">
    <property type="entry name" value="D-isomer_DH_CS"/>
</dbReference>
<dbReference type="InterPro" id="IPR029752">
    <property type="entry name" value="D-isomer_DH_CS1"/>
</dbReference>
<dbReference type="InterPro" id="IPR006140">
    <property type="entry name" value="D-isomer_DH_NAD-bd"/>
</dbReference>
<dbReference type="InterPro" id="IPR036291">
    <property type="entry name" value="NAD(P)-bd_dom_sf"/>
</dbReference>
<dbReference type="InterPro" id="IPR006236">
    <property type="entry name" value="PGDH"/>
</dbReference>
<dbReference type="InterPro" id="IPR045626">
    <property type="entry name" value="PGDH_ASB_dom"/>
</dbReference>
<dbReference type="NCBIfam" id="TIGR01327">
    <property type="entry name" value="PGDH"/>
    <property type="match status" value="1"/>
</dbReference>
<dbReference type="PANTHER" id="PTHR42789">
    <property type="entry name" value="D-ISOMER SPECIFIC 2-HYDROXYACID DEHYDROGENASE FAMILY PROTEIN (AFU_ORTHOLOGUE AFUA_6G10090)"/>
    <property type="match status" value="1"/>
</dbReference>
<dbReference type="PANTHER" id="PTHR42789:SF1">
    <property type="entry name" value="D-ISOMER SPECIFIC 2-HYDROXYACID DEHYDROGENASE FAMILY PROTEIN (AFU_ORTHOLOGUE AFUA_6G10090)"/>
    <property type="match status" value="1"/>
</dbReference>
<dbReference type="Pfam" id="PF00389">
    <property type="entry name" value="2-Hacid_dh"/>
    <property type="match status" value="1"/>
</dbReference>
<dbReference type="Pfam" id="PF02826">
    <property type="entry name" value="2-Hacid_dh_C"/>
    <property type="match status" value="1"/>
</dbReference>
<dbReference type="Pfam" id="PF01842">
    <property type="entry name" value="ACT"/>
    <property type="match status" value="1"/>
</dbReference>
<dbReference type="Pfam" id="PF19304">
    <property type="entry name" value="PGDH_inter"/>
    <property type="match status" value="1"/>
</dbReference>
<dbReference type="SUPFAM" id="SSF55021">
    <property type="entry name" value="ACT-like"/>
    <property type="match status" value="1"/>
</dbReference>
<dbReference type="SUPFAM" id="SSF52283">
    <property type="entry name" value="Formate/glycerate dehydrogenase catalytic domain-like"/>
    <property type="match status" value="1"/>
</dbReference>
<dbReference type="SUPFAM" id="SSF51735">
    <property type="entry name" value="NAD(P)-binding Rossmann-fold domains"/>
    <property type="match status" value="1"/>
</dbReference>
<dbReference type="SUPFAM" id="SSF143548">
    <property type="entry name" value="Serine metabolism enzymes domain"/>
    <property type="match status" value="1"/>
</dbReference>
<dbReference type="PROSITE" id="PS51671">
    <property type="entry name" value="ACT"/>
    <property type="match status" value="1"/>
</dbReference>
<dbReference type="PROSITE" id="PS00065">
    <property type="entry name" value="D_2_HYDROXYACID_DH_1"/>
    <property type="match status" value="1"/>
</dbReference>
<dbReference type="PROSITE" id="PS00670">
    <property type="entry name" value="D_2_HYDROXYACID_DH_2"/>
    <property type="match status" value="1"/>
</dbReference>
<dbReference type="PROSITE" id="PS00671">
    <property type="entry name" value="D_2_HYDROXYACID_DH_3"/>
    <property type="match status" value="1"/>
</dbReference>
<keyword id="KW-0028">Amino-acid biosynthesis</keyword>
<keyword id="KW-0520">NAD</keyword>
<keyword id="KW-0560">Oxidoreductase</keyword>
<keyword id="KW-1185">Reference proteome</keyword>
<keyword id="KW-0718">Serine biosynthesis</keyword>
<sequence>MDLPVVLIADKLAQSTVAALGDQVEVRWVDGPDRTKLLAAVPEADALLVRSATTVDAEVLAAAPKLKIVARAGVGLDNVDVDAATARGVLVVNAPTSNIHSAAEHALALLLAASRQIAEADASLRAHIWKRSSFSGTEIFGKTVGVVGLGRIGQLVAARIAAFGAHVIAYDPYVAPARAAQLGIELMSFDDLLARADFISVHLPKTPETAGLIDKEALAKTKPGVIIVNAARGGLVDEVALADAVRSGHVRAAGLDVFATEPCTDSPLFELSQVVVTPHLGASTAEAQDRAGTDVAESVRLALAGEFVPDAVNVDGGVVNEEVAPWLDLVCKLGVLVAALSDELPASLSVHVRGELASEDVEILRLSALRGLFSTVIEDAVTFVNAPALAAERGVSAEITTGSESPNHRSVVDVRAVASDGSVVNIAGTLSGPQLVQKIVQVNGRNFDLRAQGMNLVIRYVDQPGALGKIGTLLGAAGVNIQAAQLSEDTEGPGATILLRLDQDVPGDVRSAIVAAVSANKLEVVNLS</sequence>
<accession>O33116</accession>
<name>SERA_MYCLE</name>
<proteinExistence type="inferred from homology"/>
<feature type="chain" id="PRO_0000076004" description="D-3-phosphoglycerate dehydrogenase">
    <location>
        <begin position="1"/>
        <end position="528"/>
    </location>
</feature>
<feature type="domain" description="ACT" evidence="3">
    <location>
        <begin position="455"/>
        <end position="528"/>
    </location>
</feature>
<feature type="active site" evidence="1">
    <location>
        <position position="232"/>
    </location>
</feature>
<feature type="active site" evidence="1">
    <location>
        <position position="261"/>
    </location>
</feature>
<feature type="active site" description="Proton donor" evidence="1">
    <location>
        <position position="279"/>
    </location>
</feature>
<feature type="binding site" evidence="2">
    <location>
        <begin position="151"/>
        <end position="152"/>
    </location>
    <ligand>
        <name>NAD(+)</name>
        <dbReference type="ChEBI" id="CHEBI:57540"/>
    </ligand>
</feature>
<feature type="binding site" evidence="2">
    <location>
        <position position="171"/>
    </location>
    <ligand>
        <name>NAD(+)</name>
        <dbReference type="ChEBI" id="CHEBI:57540"/>
    </ligand>
</feature>
<feature type="binding site" evidence="2">
    <location>
        <begin position="230"/>
        <end position="232"/>
    </location>
    <ligand>
        <name>NAD(+)</name>
        <dbReference type="ChEBI" id="CHEBI:57540"/>
    </ligand>
</feature>
<feature type="binding site" evidence="2">
    <location>
        <position position="256"/>
    </location>
    <ligand>
        <name>NAD(+)</name>
        <dbReference type="ChEBI" id="CHEBI:57540"/>
    </ligand>
</feature>
<feature type="binding site" evidence="2">
    <location>
        <begin position="279"/>
        <end position="282"/>
    </location>
    <ligand>
        <name>NAD(+)</name>
        <dbReference type="ChEBI" id="CHEBI:57540"/>
    </ligand>
</feature>
<comment type="function">
    <text evidence="2">Catalyzes the reversible oxidation of 3-phospho-D-glycerate to 3-phosphonooxypyruvate, the first step of the phosphorylated L-serine biosynthesis pathway. Also catalyzes the reversible oxidation of 2-hydroxyglutarate to 2-oxoglutarate.</text>
</comment>
<comment type="catalytic activity">
    <reaction evidence="2">
        <text>(2R)-3-phosphoglycerate + NAD(+) = 3-phosphooxypyruvate + NADH + H(+)</text>
        <dbReference type="Rhea" id="RHEA:12641"/>
        <dbReference type="ChEBI" id="CHEBI:15378"/>
        <dbReference type="ChEBI" id="CHEBI:18110"/>
        <dbReference type="ChEBI" id="CHEBI:57540"/>
        <dbReference type="ChEBI" id="CHEBI:57945"/>
        <dbReference type="ChEBI" id="CHEBI:58272"/>
        <dbReference type="EC" id="1.1.1.95"/>
    </reaction>
</comment>
<comment type="catalytic activity">
    <reaction evidence="2">
        <text>(R)-2-hydroxyglutarate + NAD(+) = 2-oxoglutarate + NADH + H(+)</text>
        <dbReference type="Rhea" id="RHEA:49612"/>
        <dbReference type="ChEBI" id="CHEBI:15378"/>
        <dbReference type="ChEBI" id="CHEBI:15801"/>
        <dbReference type="ChEBI" id="CHEBI:16810"/>
        <dbReference type="ChEBI" id="CHEBI:57540"/>
        <dbReference type="ChEBI" id="CHEBI:57945"/>
        <dbReference type="EC" id="1.1.1.399"/>
    </reaction>
</comment>
<comment type="pathway">
    <text>Amino-acid biosynthesis; L-serine biosynthesis; L-serine from 3-phospho-D-glycerate: step 1/3.</text>
</comment>
<comment type="similarity">
    <text evidence="4">Belongs to the D-isomer specific 2-hydroxyacid dehydrogenase family.</text>
</comment>
<gene>
    <name type="primary">serA</name>
    <name type="ordered locus">ML1692</name>
    <name type="ORF">MLCB637.25</name>
</gene>
<protein>
    <recommendedName>
        <fullName>D-3-phosphoglycerate dehydrogenase</fullName>
        <shortName>PGDH</shortName>
        <ecNumber evidence="2">1.1.1.95</ecNumber>
    </recommendedName>
    <alternativeName>
        <fullName evidence="2">2-oxoglutarate reductase</fullName>
        <ecNumber evidence="2">1.1.1.399</ecNumber>
    </alternativeName>
</protein>
<evidence type="ECO:0000250" key="1"/>
<evidence type="ECO:0000250" key="2">
    <source>
        <dbReference type="UniProtKB" id="P0A9T0"/>
    </source>
</evidence>
<evidence type="ECO:0000255" key="3">
    <source>
        <dbReference type="PROSITE-ProRule" id="PRU01007"/>
    </source>
</evidence>
<evidence type="ECO:0000305" key="4"/>
<organism>
    <name type="scientific">Mycobacterium leprae (strain TN)</name>
    <dbReference type="NCBI Taxonomy" id="272631"/>
    <lineage>
        <taxon>Bacteria</taxon>
        <taxon>Bacillati</taxon>
        <taxon>Actinomycetota</taxon>
        <taxon>Actinomycetes</taxon>
        <taxon>Mycobacteriales</taxon>
        <taxon>Mycobacteriaceae</taxon>
        <taxon>Mycobacterium</taxon>
    </lineage>
</organism>
<reference key="1">
    <citation type="journal article" date="2001" name="Nature">
        <title>Massive gene decay in the leprosy bacillus.</title>
        <authorList>
            <person name="Cole S.T."/>
            <person name="Eiglmeier K."/>
            <person name="Parkhill J."/>
            <person name="James K.D."/>
            <person name="Thomson N.R."/>
            <person name="Wheeler P.R."/>
            <person name="Honore N."/>
            <person name="Garnier T."/>
            <person name="Churcher C.M."/>
            <person name="Harris D.E."/>
            <person name="Mungall K.L."/>
            <person name="Basham D."/>
            <person name="Brown D."/>
            <person name="Chillingworth T."/>
            <person name="Connor R."/>
            <person name="Davies R.M."/>
            <person name="Devlin K."/>
            <person name="Duthoy S."/>
            <person name="Feltwell T."/>
            <person name="Fraser A."/>
            <person name="Hamlin N."/>
            <person name="Holroyd S."/>
            <person name="Hornsby T."/>
            <person name="Jagels K."/>
            <person name="Lacroix C."/>
            <person name="Maclean J."/>
            <person name="Moule S."/>
            <person name="Murphy L.D."/>
            <person name="Oliver K."/>
            <person name="Quail M.A."/>
            <person name="Rajandream M.A."/>
            <person name="Rutherford K.M."/>
            <person name="Rutter S."/>
            <person name="Seeger K."/>
            <person name="Simon S."/>
            <person name="Simmonds M."/>
            <person name="Skelton J."/>
            <person name="Squares R."/>
            <person name="Squares S."/>
            <person name="Stevens K."/>
            <person name="Taylor K."/>
            <person name="Whitehead S."/>
            <person name="Woodward J.R."/>
            <person name="Barrell B.G."/>
        </authorList>
    </citation>
    <scope>NUCLEOTIDE SEQUENCE [LARGE SCALE GENOMIC DNA]</scope>
    <source>
        <strain>TN</strain>
    </source>
</reference>